<reference key="1">
    <citation type="journal article" date="1997" name="Microbiology">
        <title>Analysis of the Bacillus subtilis genome: cloning and nucleotide sequence of a 62 kb region between 275 degrees (rrnB) and 284 degrees (pai).</title>
        <authorList>
            <person name="Oudega B."/>
            <person name="Koningstein G."/>
            <person name="Rodrigues L."/>
            <person name="de Sales Ramon M."/>
            <person name="Hilbert H."/>
            <person name="Duesterhoeft A."/>
            <person name="Pohl T.M."/>
            <person name="Weitzenegger T."/>
        </authorList>
    </citation>
    <scope>NUCLEOTIDE SEQUENCE [GENOMIC DNA]</scope>
    <source>
        <strain>168</strain>
    </source>
</reference>
<reference key="2">
    <citation type="journal article" date="1997" name="Nature">
        <title>The complete genome sequence of the Gram-positive bacterium Bacillus subtilis.</title>
        <authorList>
            <person name="Kunst F."/>
            <person name="Ogasawara N."/>
            <person name="Moszer I."/>
            <person name="Albertini A.M."/>
            <person name="Alloni G."/>
            <person name="Azevedo V."/>
            <person name="Bertero M.G."/>
            <person name="Bessieres P."/>
            <person name="Bolotin A."/>
            <person name="Borchert S."/>
            <person name="Borriss R."/>
            <person name="Boursier L."/>
            <person name="Brans A."/>
            <person name="Braun M."/>
            <person name="Brignell S.C."/>
            <person name="Bron S."/>
            <person name="Brouillet S."/>
            <person name="Bruschi C.V."/>
            <person name="Caldwell B."/>
            <person name="Capuano V."/>
            <person name="Carter N.M."/>
            <person name="Choi S.-K."/>
            <person name="Codani J.-J."/>
            <person name="Connerton I.F."/>
            <person name="Cummings N.J."/>
            <person name="Daniel R.A."/>
            <person name="Denizot F."/>
            <person name="Devine K.M."/>
            <person name="Duesterhoeft A."/>
            <person name="Ehrlich S.D."/>
            <person name="Emmerson P.T."/>
            <person name="Entian K.-D."/>
            <person name="Errington J."/>
            <person name="Fabret C."/>
            <person name="Ferrari E."/>
            <person name="Foulger D."/>
            <person name="Fritz C."/>
            <person name="Fujita M."/>
            <person name="Fujita Y."/>
            <person name="Fuma S."/>
            <person name="Galizzi A."/>
            <person name="Galleron N."/>
            <person name="Ghim S.-Y."/>
            <person name="Glaser P."/>
            <person name="Goffeau A."/>
            <person name="Golightly E.J."/>
            <person name="Grandi G."/>
            <person name="Guiseppi G."/>
            <person name="Guy B.J."/>
            <person name="Haga K."/>
            <person name="Haiech J."/>
            <person name="Harwood C.R."/>
            <person name="Henaut A."/>
            <person name="Hilbert H."/>
            <person name="Holsappel S."/>
            <person name="Hosono S."/>
            <person name="Hullo M.-F."/>
            <person name="Itaya M."/>
            <person name="Jones L.-M."/>
            <person name="Joris B."/>
            <person name="Karamata D."/>
            <person name="Kasahara Y."/>
            <person name="Klaerr-Blanchard M."/>
            <person name="Klein C."/>
            <person name="Kobayashi Y."/>
            <person name="Koetter P."/>
            <person name="Koningstein G."/>
            <person name="Krogh S."/>
            <person name="Kumano M."/>
            <person name="Kurita K."/>
            <person name="Lapidus A."/>
            <person name="Lardinois S."/>
            <person name="Lauber J."/>
            <person name="Lazarevic V."/>
            <person name="Lee S.-M."/>
            <person name="Levine A."/>
            <person name="Liu H."/>
            <person name="Masuda S."/>
            <person name="Mauel C."/>
            <person name="Medigue C."/>
            <person name="Medina N."/>
            <person name="Mellado R.P."/>
            <person name="Mizuno M."/>
            <person name="Moestl D."/>
            <person name="Nakai S."/>
            <person name="Noback M."/>
            <person name="Noone D."/>
            <person name="O'Reilly M."/>
            <person name="Ogawa K."/>
            <person name="Ogiwara A."/>
            <person name="Oudega B."/>
            <person name="Park S.-H."/>
            <person name="Parro V."/>
            <person name="Pohl T.M."/>
            <person name="Portetelle D."/>
            <person name="Porwollik S."/>
            <person name="Prescott A.M."/>
            <person name="Presecan E."/>
            <person name="Pujic P."/>
            <person name="Purnelle B."/>
            <person name="Rapoport G."/>
            <person name="Rey M."/>
            <person name="Reynolds S."/>
            <person name="Rieger M."/>
            <person name="Rivolta C."/>
            <person name="Rocha E."/>
            <person name="Roche B."/>
            <person name="Rose M."/>
            <person name="Sadaie Y."/>
            <person name="Sato T."/>
            <person name="Scanlan E."/>
            <person name="Schleich S."/>
            <person name="Schroeter R."/>
            <person name="Scoffone F."/>
            <person name="Sekiguchi J."/>
            <person name="Sekowska A."/>
            <person name="Seror S.J."/>
            <person name="Serror P."/>
            <person name="Shin B.-S."/>
            <person name="Soldo B."/>
            <person name="Sorokin A."/>
            <person name="Tacconi E."/>
            <person name="Takagi T."/>
            <person name="Takahashi H."/>
            <person name="Takemaru K."/>
            <person name="Takeuchi M."/>
            <person name="Tamakoshi A."/>
            <person name="Tanaka T."/>
            <person name="Terpstra P."/>
            <person name="Tognoni A."/>
            <person name="Tosato V."/>
            <person name="Uchiyama S."/>
            <person name="Vandenbol M."/>
            <person name="Vannier F."/>
            <person name="Vassarotti A."/>
            <person name="Viari A."/>
            <person name="Wambutt R."/>
            <person name="Wedler E."/>
            <person name="Wedler H."/>
            <person name="Weitzenegger T."/>
            <person name="Winters P."/>
            <person name="Wipat A."/>
            <person name="Yamamoto H."/>
            <person name="Yamane K."/>
            <person name="Yasumoto K."/>
            <person name="Yata K."/>
            <person name="Yoshida K."/>
            <person name="Yoshikawa H.-F."/>
            <person name="Zumstein E."/>
            <person name="Yoshikawa H."/>
            <person name="Danchin A."/>
        </authorList>
    </citation>
    <scope>NUCLEOTIDE SEQUENCE [LARGE SCALE GENOMIC DNA]</scope>
    <source>
        <strain>168</strain>
    </source>
</reference>
<reference key="3">
    <citation type="journal article" date="2011" name="J. Bacteriol.">
        <title>CodY-mediated regulation of guanosine uptake in Bacillus subtilis.</title>
        <authorList>
            <person name="Belitsky B.R."/>
            <person name="Sonenshein A.L."/>
        </authorList>
    </citation>
    <scope>FUNCTION</scope>
    <scope>SUBUNIT</scope>
    <scope>INDUCTION</scope>
    <source>
        <strain>168 / SMY</strain>
    </source>
</reference>
<keyword id="KW-1003">Cell membrane</keyword>
<keyword id="KW-0472">Membrane</keyword>
<keyword id="KW-1185">Reference proteome</keyword>
<keyword id="KW-0812">Transmembrane</keyword>
<keyword id="KW-1133">Transmembrane helix</keyword>
<keyword id="KW-0813">Transport</keyword>
<dbReference type="EMBL" id="Z93937">
    <property type="protein sequence ID" value="CAB07939.1"/>
    <property type="molecule type" value="Genomic_DNA"/>
</dbReference>
<dbReference type="EMBL" id="AL009126">
    <property type="protein sequence ID" value="CAB15146.1"/>
    <property type="molecule type" value="Genomic_DNA"/>
</dbReference>
<dbReference type="PIR" id="F70009">
    <property type="entry name" value="F70009"/>
</dbReference>
<dbReference type="RefSeq" id="NP_391035.1">
    <property type="nucleotide sequence ID" value="NC_000964.3"/>
</dbReference>
<dbReference type="RefSeq" id="WP_003228827.1">
    <property type="nucleotide sequence ID" value="NZ_OZ025638.1"/>
</dbReference>
<dbReference type="FunCoup" id="O05255">
    <property type="interactions" value="246"/>
</dbReference>
<dbReference type="STRING" id="224308.BSU31570"/>
<dbReference type="PaxDb" id="224308-BSU31570"/>
<dbReference type="EnsemblBacteria" id="CAB15146">
    <property type="protein sequence ID" value="CAB15146"/>
    <property type="gene ID" value="BSU_31570"/>
</dbReference>
<dbReference type="GeneID" id="937176"/>
<dbReference type="KEGG" id="bsu:BSU31570"/>
<dbReference type="PATRIC" id="fig|224308.179.peg.3422"/>
<dbReference type="eggNOG" id="COG1079">
    <property type="taxonomic scope" value="Bacteria"/>
</dbReference>
<dbReference type="InParanoid" id="O05255"/>
<dbReference type="OrthoDB" id="9792579at2"/>
<dbReference type="PhylomeDB" id="O05255"/>
<dbReference type="BioCyc" id="BSUB:BSU31570-MONOMER"/>
<dbReference type="Proteomes" id="UP000001570">
    <property type="component" value="Chromosome"/>
</dbReference>
<dbReference type="GO" id="GO:0005886">
    <property type="term" value="C:plasma membrane"/>
    <property type="evidence" value="ECO:0007669"/>
    <property type="project" value="UniProtKB-SubCell"/>
</dbReference>
<dbReference type="GO" id="GO:0022857">
    <property type="term" value="F:transmembrane transporter activity"/>
    <property type="evidence" value="ECO:0007669"/>
    <property type="project" value="InterPro"/>
</dbReference>
<dbReference type="CDD" id="cd06580">
    <property type="entry name" value="TM_PBP1_transp_TpRbsC_like"/>
    <property type="match status" value="1"/>
</dbReference>
<dbReference type="InterPro" id="IPR001851">
    <property type="entry name" value="ABC_transp_permease"/>
</dbReference>
<dbReference type="PANTHER" id="PTHR43370:SF1">
    <property type="entry name" value="GUANOSINE ABC TRANSPORTER PERMEASE PROTEIN NUPQ"/>
    <property type="match status" value="1"/>
</dbReference>
<dbReference type="PANTHER" id="PTHR43370">
    <property type="entry name" value="SUGAR ABC TRANSPORTER INTEGRAL MEMBRANE PROTEIN-RELATED"/>
    <property type="match status" value="1"/>
</dbReference>
<dbReference type="Pfam" id="PF02653">
    <property type="entry name" value="BPD_transp_2"/>
    <property type="match status" value="1"/>
</dbReference>
<feature type="chain" id="PRO_0000360517" description="Guanosine ABC transporter permease protein NupQ">
    <location>
        <begin position="1"/>
        <end position="319"/>
    </location>
</feature>
<feature type="transmembrane region" description="Helical" evidence="1">
    <location>
        <begin position="6"/>
        <end position="26"/>
    </location>
</feature>
<feature type="transmembrane region" description="Helical" evidence="1">
    <location>
        <begin position="39"/>
        <end position="59"/>
    </location>
</feature>
<feature type="transmembrane region" description="Helical" evidence="1">
    <location>
        <begin position="65"/>
        <end position="85"/>
    </location>
</feature>
<feature type="transmembrane region" description="Helical" evidence="1">
    <location>
        <begin position="99"/>
        <end position="119"/>
    </location>
</feature>
<feature type="transmembrane region" description="Helical" evidence="1">
    <location>
        <begin position="159"/>
        <end position="179"/>
    </location>
</feature>
<feature type="transmembrane region" description="Helical" evidence="1">
    <location>
        <begin position="204"/>
        <end position="224"/>
    </location>
</feature>
<feature type="transmembrane region" description="Helical" evidence="1">
    <location>
        <begin position="235"/>
        <end position="255"/>
    </location>
</feature>
<feature type="transmembrane region" description="Helical" evidence="1">
    <location>
        <begin position="257"/>
        <end position="277"/>
    </location>
</feature>
<feature type="transmembrane region" description="Helical" evidence="1">
    <location>
        <begin position="282"/>
        <end position="302"/>
    </location>
</feature>
<sequence length="319" mass="33738">MDIVQILSIIVPATLVYAAPLILTALGGVFSERSGVVNIGLEGLMIIGAFTSVLFNLFFGQELGAAAPWLSLLAAMAAGALFSLIHAAAAISFRADQTVSGVAINMLALGATLFIVKLIYGKAQTDKIPEPFYKTKIPGLGDIPVLGKIFFSDVYYTSILAIALAFISWFILFKTPFGLRIRSVGEHPMAADTMGINVYKMRYIGVMISGLFGGLGGGVYASTIALDFTHSTISGQGFIALAALVFGKWHPIGALGAALFFGFAQSLSIIGSLLPLFKDIPNVYMLMAPYILTILALTGFIGRADAPKANGVPYIKGKR</sequence>
<accession>O05255</accession>
<accession>Q795L9</accession>
<protein>
    <recommendedName>
        <fullName evidence="4">Guanosine ABC transporter permease protein NupQ</fullName>
    </recommendedName>
</protein>
<proteinExistence type="evidence at protein level"/>
<comment type="function">
    <text evidence="2 4">Part of an ABC transporter complex involved in the uptake of guanosine (PubMed:21926227). Responsible for the translocation of the substrate across the membrane (Probable). May be a nucleoside transporter of broad specificity but with various affinities for different substrates (PubMed:21926227).</text>
</comment>
<comment type="subunit">
    <text evidence="5">The complex is composed of two ATP-binding proteins (NupO), two transmembrane proteins (NupP and NupQ) and a solute-binding protein (NupN).</text>
</comment>
<comment type="subcellular location">
    <subcellularLocation>
        <location evidence="4">Cell membrane</location>
        <topology evidence="1">Multi-pass membrane protein</topology>
    </subcellularLocation>
</comment>
<comment type="induction">
    <text evidence="2">Transcriptionally regulated by CodY.</text>
</comment>
<comment type="similarity">
    <text evidence="4">Belongs to the binding-protein-dependent transport system permease family.</text>
</comment>
<name>NUPQ_BACSU</name>
<organism>
    <name type="scientific">Bacillus subtilis (strain 168)</name>
    <dbReference type="NCBI Taxonomy" id="224308"/>
    <lineage>
        <taxon>Bacteria</taxon>
        <taxon>Bacillati</taxon>
        <taxon>Bacillota</taxon>
        <taxon>Bacilli</taxon>
        <taxon>Bacillales</taxon>
        <taxon>Bacillaceae</taxon>
        <taxon>Bacillus</taxon>
    </lineage>
</organism>
<gene>
    <name evidence="3" type="primary">nupQ</name>
    <name type="synonym">yufQ</name>
    <name type="ordered locus">BSU31570</name>
</gene>
<evidence type="ECO:0000255" key="1"/>
<evidence type="ECO:0000269" key="2">
    <source>
    </source>
</evidence>
<evidence type="ECO:0000303" key="3">
    <source>
    </source>
</evidence>
<evidence type="ECO:0000305" key="4"/>
<evidence type="ECO:0000305" key="5">
    <source>
    </source>
</evidence>